<sequence length="635" mass="70806">MAPKKNKAAKKSKADINEMTIMVEDSPSNKINGLNTLLEGGNGFSCISTEVTDPVYAPNLLEGLGHMRQDSFLCDLTVATKSKSFDVHKVVMASCSEYIQNMLRKDPSLKKIELSDLSPVGLATVITYAYSGKLTLSLYTIGSTISAALLLQIHTLVKMCSDFLMRETSVENCMYVVNIADTYNLKETKEAAQKFMRENFIEFSEMEQFLKLTYEQINEFLTDDSLQLPSELTAFQIAVKWLDFDEKRLKYAPDLLSNIRFGTITPQDLVSHVQNVPRMMQDAECHRLLVDAMNYHLLPFQQNILQSRRTKVRGGLRVLLTVGGRPALTEKSLSKDILYRDEDNVWNKLTEMPAKSFNQCVAVLDGFLYVAGGEDQNDARNQAKHAVSNFSRYDPRFNTWIHLANMIQKRTHFSLNTFNGLLFAVGGRNSDGCQASVECYVPSSNQWQMKAPMEVPRCCHASSVIDGKILVSGGYINNAYSRAVCSYDPSTDSWQDKNSLSSPRGWHCSVTVGDRAYVLGGSQLGGRGERVDVLPVECYNPHSGQWSYVAPLLTGVSTAGAATLNNKIYLLGGWNEIEKKYKKCIQVYNPDLNEWTEDDELPEATVGISCCVVTIPTRKTRESRASSVSSAPVSI</sequence>
<comment type="tissue specificity">
    <text evidence="2">Strongly expressed in fast skeletal muscle, and weakly in heart. Not expressed in other tissues.</text>
</comment>
<comment type="developmental stage">
    <text evidence="2">Expressed from 10.5 hours post-fertilization (hpf). During embryogenesis, expression is restricted to developing somites and heart.</text>
</comment>
<protein>
    <recommendedName>
        <fullName>Kelch-like protein 31</fullName>
    </recommendedName>
    <alternativeName>
        <fullName>Kelch repeat and BTB domain-containing protein 1</fullName>
    </alternativeName>
    <alternativeName>
        <fullName>Kelch-like protein Klhl</fullName>
    </alternativeName>
</protein>
<accession>Q6Q7X9</accession>
<reference key="1">
    <citation type="journal article" date="2004" name="Gene">
        <title>A novel zebrafish kelchlike gene klhl and its human ortholog KLHL display conserved expression patterns in skeletal and cardiac muscles.</title>
        <authorList>
            <person name="Wu Y.L."/>
            <person name="Gong Z."/>
        </authorList>
    </citation>
    <scope>NUCLEOTIDE SEQUENCE [MRNA]</scope>
    <scope>DEVELOPMENTAL STAGE</scope>
    <scope>TISSUE SPECIFICITY</scope>
</reference>
<feature type="chain" id="PRO_0000271037" description="Kelch-like protein 31">
    <location>
        <begin position="1"/>
        <end position="635"/>
    </location>
</feature>
<feature type="domain" description="BTB" evidence="1">
    <location>
        <begin position="74"/>
        <end position="138"/>
    </location>
</feature>
<feature type="domain" description="BACK">
    <location>
        <begin position="173"/>
        <end position="274"/>
    </location>
</feature>
<feature type="repeat" description="Kelch 1">
    <location>
        <begin position="318"/>
        <end position="366"/>
    </location>
</feature>
<feature type="repeat" description="Kelch 2">
    <location>
        <begin position="367"/>
        <end position="420"/>
    </location>
</feature>
<feature type="repeat" description="Kelch 3">
    <location>
        <begin position="421"/>
        <end position="467"/>
    </location>
</feature>
<feature type="repeat" description="Kelch 4">
    <location>
        <begin position="469"/>
        <end position="514"/>
    </location>
</feature>
<feature type="repeat" description="Kelch 5">
    <location>
        <begin position="516"/>
        <end position="566"/>
    </location>
</feature>
<feature type="repeat" description="Kelch 6">
    <location>
        <begin position="567"/>
        <end position="615"/>
    </location>
</feature>
<dbReference type="EMBL" id="AY553639">
    <property type="protein sequence ID" value="AAS84610.1"/>
    <property type="molecule type" value="mRNA"/>
</dbReference>
<dbReference type="RefSeq" id="NP_001003727.1">
    <property type="nucleotide sequence ID" value="NM_001003727.3"/>
</dbReference>
<dbReference type="RefSeq" id="XP_005156548.1">
    <property type="nucleotide sequence ID" value="XM_005156491.3"/>
</dbReference>
<dbReference type="SMR" id="Q6Q7X9"/>
<dbReference type="FunCoup" id="Q6Q7X9">
    <property type="interactions" value="647"/>
</dbReference>
<dbReference type="STRING" id="7955.ENSDARP00000110003"/>
<dbReference type="PaxDb" id="7955-ENSDARP00000111671"/>
<dbReference type="Ensembl" id="ENSDART00000102791">
    <property type="protein sequence ID" value="ENSDARP00000093566"/>
    <property type="gene ID" value="ENSDARG00000039066"/>
</dbReference>
<dbReference type="Ensembl" id="ENSDART00000129911">
    <property type="protein sequence ID" value="ENSDARP00000110003"/>
    <property type="gene ID" value="ENSDARG00000039066"/>
</dbReference>
<dbReference type="GeneID" id="407079"/>
<dbReference type="KEGG" id="dre:407079"/>
<dbReference type="AGR" id="ZFIN:ZDB-GENE-030131-2052"/>
<dbReference type="CTD" id="401265"/>
<dbReference type="ZFIN" id="ZDB-GENE-030131-2052">
    <property type="gene designation" value="klhl31"/>
</dbReference>
<dbReference type="eggNOG" id="KOG4441">
    <property type="taxonomic scope" value="Eukaryota"/>
</dbReference>
<dbReference type="HOGENOM" id="CLU_004253_14_3_1"/>
<dbReference type="InParanoid" id="Q6Q7X9"/>
<dbReference type="OMA" id="FNSWIHL"/>
<dbReference type="OrthoDB" id="6678352at2759"/>
<dbReference type="PhylomeDB" id="Q6Q7X9"/>
<dbReference type="TreeFam" id="TF328485"/>
<dbReference type="PRO" id="PR:Q6Q7X9"/>
<dbReference type="Proteomes" id="UP000000437">
    <property type="component" value="Chromosome 13"/>
</dbReference>
<dbReference type="Bgee" id="ENSDARG00000039066">
    <property type="expression patterns" value="Expressed in muscle tissue and 12 other cell types or tissues"/>
</dbReference>
<dbReference type="ExpressionAtlas" id="Q6Q7X9">
    <property type="expression patterns" value="baseline and differential"/>
</dbReference>
<dbReference type="GO" id="GO:0005737">
    <property type="term" value="C:cytoplasm"/>
    <property type="evidence" value="ECO:0000318"/>
    <property type="project" value="GO_Central"/>
</dbReference>
<dbReference type="GO" id="GO:0005634">
    <property type="term" value="C:nucleus"/>
    <property type="evidence" value="ECO:0000318"/>
    <property type="project" value="GO_Central"/>
</dbReference>
<dbReference type="CDD" id="cd18470">
    <property type="entry name" value="BACK_KLHL31_KBTBD1"/>
    <property type="match status" value="1"/>
</dbReference>
<dbReference type="CDD" id="cd18260">
    <property type="entry name" value="BTB_POZ_KLHL31_KBTBD1"/>
    <property type="match status" value="1"/>
</dbReference>
<dbReference type="Gene3D" id="1.25.40.420">
    <property type="match status" value="1"/>
</dbReference>
<dbReference type="Gene3D" id="2.120.10.80">
    <property type="entry name" value="Kelch-type beta propeller"/>
    <property type="match status" value="1"/>
</dbReference>
<dbReference type="Gene3D" id="3.30.710.10">
    <property type="entry name" value="Potassium Channel Kv1.1, Chain A"/>
    <property type="match status" value="1"/>
</dbReference>
<dbReference type="InterPro" id="IPR011705">
    <property type="entry name" value="BACK"/>
</dbReference>
<dbReference type="InterPro" id="IPR000210">
    <property type="entry name" value="BTB/POZ_dom"/>
</dbReference>
<dbReference type="InterPro" id="IPR030604">
    <property type="entry name" value="BTB_POZ_KLHL31"/>
</dbReference>
<dbReference type="InterPro" id="IPR015915">
    <property type="entry name" value="Kelch-typ_b-propeller"/>
</dbReference>
<dbReference type="InterPro" id="IPR006652">
    <property type="entry name" value="Kelch_1"/>
</dbReference>
<dbReference type="InterPro" id="IPR011333">
    <property type="entry name" value="SKP1/BTB/POZ_sf"/>
</dbReference>
<dbReference type="PANTHER" id="PTHR45632:SF29">
    <property type="entry name" value="KELCH-LIKE PROTEIN 31"/>
    <property type="match status" value="1"/>
</dbReference>
<dbReference type="PANTHER" id="PTHR45632">
    <property type="entry name" value="LD33804P"/>
    <property type="match status" value="1"/>
</dbReference>
<dbReference type="Pfam" id="PF07707">
    <property type="entry name" value="BACK"/>
    <property type="match status" value="1"/>
</dbReference>
<dbReference type="Pfam" id="PF00651">
    <property type="entry name" value="BTB"/>
    <property type="match status" value="1"/>
</dbReference>
<dbReference type="Pfam" id="PF01344">
    <property type="entry name" value="Kelch_1"/>
    <property type="match status" value="1"/>
</dbReference>
<dbReference type="Pfam" id="PF24681">
    <property type="entry name" value="Kelch_KLHDC2_KLHL20_DRC7"/>
    <property type="match status" value="1"/>
</dbReference>
<dbReference type="SMART" id="SM00875">
    <property type="entry name" value="BACK"/>
    <property type="match status" value="1"/>
</dbReference>
<dbReference type="SMART" id="SM00225">
    <property type="entry name" value="BTB"/>
    <property type="match status" value="1"/>
</dbReference>
<dbReference type="SMART" id="SM00612">
    <property type="entry name" value="Kelch"/>
    <property type="match status" value="6"/>
</dbReference>
<dbReference type="SUPFAM" id="SSF117281">
    <property type="entry name" value="Kelch motif"/>
    <property type="match status" value="1"/>
</dbReference>
<dbReference type="SUPFAM" id="SSF54695">
    <property type="entry name" value="POZ domain"/>
    <property type="match status" value="1"/>
</dbReference>
<dbReference type="PROSITE" id="PS50097">
    <property type="entry name" value="BTB"/>
    <property type="match status" value="1"/>
</dbReference>
<organism>
    <name type="scientific">Danio rerio</name>
    <name type="common">Zebrafish</name>
    <name type="synonym">Brachydanio rerio</name>
    <dbReference type="NCBI Taxonomy" id="7955"/>
    <lineage>
        <taxon>Eukaryota</taxon>
        <taxon>Metazoa</taxon>
        <taxon>Chordata</taxon>
        <taxon>Craniata</taxon>
        <taxon>Vertebrata</taxon>
        <taxon>Euteleostomi</taxon>
        <taxon>Actinopterygii</taxon>
        <taxon>Neopterygii</taxon>
        <taxon>Teleostei</taxon>
        <taxon>Ostariophysi</taxon>
        <taxon>Cypriniformes</taxon>
        <taxon>Danionidae</taxon>
        <taxon>Danioninae</taxon>
        <taxon>Danio</taxon>
    </lineage>
</organism>
<keyword id="KW-0880">Kelch repeat</keyword>
<keyword id="KW-1185">Reference proteome</keyword>
<keyword id="KW-0677">Repeat</keyword>
<evidence type="ECO:0000255" key="1">
    <source>
        <dbReference type="PROSITE-ProRule" id="PRU00037"/>
    </source>
</evidence>
<evidence type="ECO:0000269" key="2">
    <source>
    </source>
</evidence>
<name>KLH31_DANRE</name>
<gene>
    <name type="primary">klhl31</name>
    <name type="synonym">kbtbd1</name>
    <name type="synonym">klhl</name>
</gene>
<proteinExistence type="evidence at transcript level"/>